<proteinExistence type="evidence at transcript level"/>
<reference key="1">
    <citation type="submission" date="2004-05" db="EMBL/GenBank/DDBJ databases">
        <authorList>
            <consortium name="NIH - Xenopus Gene Collection (XGC) project"/>
        </authorList>
    </citation>
    <scope>NUCLEOTIDE SEQUENCE [LARGE SCALE MRNA]</scope>
    <source>
        <tissue>Oocyte</tissue>
    </source>
</reference>
<feature type="chain" id="PRO_0000249479" description="Centromere protein S">
    <location>
        <begin position="1"/>
        <end position="135"/>
    </location>
</feature>
<feature type="region of interest" description="Disordered" evidence="2">
    <location>
        <begin position="103"/>
        <end position="135"/>
    </location>
</feature>
<accession>Q6NRI8</accession>
<comment type="function">
    <text evidence="1">DNA-binding component of the Fanconi anemia (FA) core complex. Required for the normal activation of the FA pathway, leading to monoubiquitination of the FANCI-FANCD2 complex in response to DNA damage, cellular resistance to DNA cross-linking drugs, and prevention of chromosomal breakage. In complex with CENPX (MHF heterodimer), crucial cofactor for FANCM in both binding and ATP-dependent remodeling of DNA. Stabilizes FANCM. In complex with CENPX and FANCM (but not other FANC proteins), rapidly recruited to blocked forks and promotes gene conversion at blocked replication forks. In complex with CENPT, CENPW and CENPX (CENP-T-W-S-X heterotetramer), involved in the formation of a functional kinetochore outer plate, which is essential for kinetochore-microtubule attachment and faithful mitotic progression. As a component of MHF and CENP-T-W-S-X complexes, binds DNA and bends it to form a nucleosome-like structure. DNA-binding function is fulfilled in the presence of CENPX, with the following preference for DNA substates: Holliday junction &gt; double-stranded &gt; splay arm &gt; single-stranded. Does not bind DNA on its own.</text>
</comment>
<comment type="subunit">
    <text evidence="1">Heterodimer with CENPX, sometimes called MHF; this interaction stabilizes both partners. MHF heterodimers can assemble to form tetrameric structures. MHF also coassemble with CENPT-CENPW heterodimers at centromeres to form the tetrameric CENP-T-W-S-X complex. Forms a discrete complex with FANCM and CENPX, called FANCM-MHF; this interaction, probably mediated by direct binding between CENPS and FANCM, leads to synergistic activation of double-stranded DNA binding and strongly stimulates FANCM-mediated DNA remodeling. Recruited by FANCM to the Fanconi anemia (FA) core complex, which consists of CENPS, CENPX, FANCA, FANCB, FANCC, FANCE, FANCF, FANCG, FANCL, FANCM, FAAP24 and FAAP100. The FA core complex associates with Bloom syndrome (BLM) complex, which consists of at least BLM, DNA topoisomerase 3-alpha (TOP3A), RMI1/BLAP75, RPA1/RPA70 and RPA2/RPA32. The super complex between FA and BLM is called BRAFT. Component of the CENPA-CAD complex, composed of CENPI, CENPK, CENPL, CENPO, CENPP, CENPQ, CENPR and CENPS. The CENPA-CAD complex is probably recruited on centromeres by the CENPA-NAC complex, at least composed of CENPA, CENPC, CENPH, CENPM, CENPN, CENPT and CENPU.</text>
</comment>
<comment type="subcellular location">
    <subcellularLocation>
        <location evidence="1">Nucleus</location>
    </subcellularLocation>
    <subcellularLocation>
        <location evidence="1">Chromosome</location>
        <location evidence="1">Centromere</location>
    </subcellularLocation>
    <subcellularLocation>
        <location evidence="1">Chromosome</location>
        <location evidence="1">Centromere</location>
        <location evidence="1">Kinetochore</location>
    </subcellularLocation>
    <text evidence="1">Assembly of CENPS and CENPX and its partner subunits CENPT and CENPW at centromeres occurs through a dynamic exchange mechanism. Although exchange is continuous in the cell cycle, de novo assembly starts principally during mid-late S phase and is complete by G2. CENPS is more stably bound at the kinetochore than CENPX. During S phase, rapidly recruited to DNA interstrand cross-links that block replication. Recruited to DNA damage sites about 20 minutes following UV irradiation, reaching a plateau after approximately 40 minutes.</text>
</comment>
<comment type="similarity">
    <text evidence="3">Belongs to the TAF9 family. CENP-S/MHF1 subfamily.</text>
</comment>
<keyword id="KW-0131">Cell cycle</keyword>
<keyword id="KW-0132">Cell division</keyword>
<keyword id="KW-0137">Centromere</keyword>
<keyword id="KW-0158">Chromosome</keyword>
<keyword id="KW-0227">DNA damage</keyword>
<keyword id="KW-0234">DNA repair</keyword>
<keyword id="KW-0238">DNA-binding</keyword>
<keyword id="KW-0995">Kinetochore</keyword>
<keyword id="KW-0498">Mitosis</keyword>
<keyword id="KW-0539">Nucleus</keyword>
<keyword id="KW-1185">Reference proteome</keyword>
<dbReference type="EMBL" id="BC070762">
    <property type="protein sequence ID" value="AAH70762.1"/>
    <property type="molecule type" value="mRNA"/>
</dbReference>
<dbReference type="RefSeq" id="NP_001084907.1">
    <property type="nucleotide sequence ID" value="NM_001091438.1"/>
</dbReference>
<dbReference type="SMR" id="Q6NRI8"/>
<dbReference type="DNASU" id="431958"/>
<dbReference type="GeneID" id="431958"/>
<dbReference type="KEGG" id="xla:431958"/>
<dbReference type="AGR" id="Xenbase:XB-GENE-5938577"/>
<dbReference type="CTD" id="431958"/>
<dbReference type="Xenbase" id="XB-GENE-5938577">
    <property type="gene designation" value="cenps.L"/>
</dbReference>
<dbReference type="OMA" id="WTQIENV"/>
<dbReference type="OrthoDB" id="1872155at2759"/>
<dbReference type="Proteomes" id="UP000186698">
    <property type="component" value="Chromosome 7L"/>
</dbReference>
<dbReference type="Bgee" id="431958">
    <property type="expression patterns" value="Expressed in blastula and 18 other cell types or tissues"/>
</dbReference>
<dbReference type="GO" id="GO:0071821">
    <property type="term" value="C:FANCM-MHF complex"/>
    <property type="evidence" value="ECO:0000250"/>
    <property type="project" value="UniProtKB"/>
</dbReference>
<dbReference type="GO" id="GO:0043240">
    <property type="term" value="C:Fanconi anaemia nuclear complex"/>
    <property type="evidence" value="ECO:0000250"/>
    <property type="project" value="UniProtKB"/>
</dbReference>
<dbReference type="GO" id="GO:0000776">
    <property type="term" value="C:kinetochore"/>
    <property type="evidence" value="ECO:0007669"/>
    <property type="project" value="UniProtKB-KW"/>
</dbReference>
<dbReference type="GO" id="GO:0003682">
    <property type="term" value="F:chromatin binding"/>
    <property type="evidence" value="ECO:0000250"/>
    <property type="project" value="UniProtKB"/>
</dbReference>
<dbReference type="GO" id="GO:0003677">
    <property type="term" value="F:DNA binding"/>
    <property type="evidence" value="ECO:0000250"/>
    <property type="project" value="UniProtKB"/>
</dbReference>
<dbReference type="GO" id="GO:0046982">
    <property type="term" value="F:protein heterodimerization activity"/>
    <property type="evidence" value="ECO:0007669"/>
    <property type="project" value="InterPro"/>
</dbReference>
<dbReference type="GO" id="GO:0051301">
    <property type="term" value="P:cell division"/>
    <property type="evidence" value="ECO:0007669"/>
    <property type="project" value="UniProtKB-KW"/>
</dbReference>
<dbReference type="GO" id="GO:0006974">
    <property type="term" value="P:DNA damage response"/>
    <property type="evidence" value="ECO:0000250"/>
    <property type="project" value="UniProtKB"/>
</dbReference>
<dbReference type="GO" id="GO:0006281">
    <property type="term" value="P:DNA repair"/>
    <property type="evidence" value="ECO:0000250"/>
    <property type="project" value="UniProtKB"/>
</dbReference>
<dbReference type="GO" id="GO:0031297">
    <property type="term" value="P:replication fork processing"/>
    <property type="evidence" value="ECO:0000250"/>
    <property type="project" value="UniProtKB"/>
</dbReference>
<dbReference type="GO" id="GO:0000712">
    <property type="term" value="P:resolution of meiotic recombination intermediates"/>
    <property type="evidence" value="ECO:0000250"/>
    <property type="project" value="UniProtKB"/>
</dbReference>
<dbReference type="CDD" id="cd22919">
    <property type="entry name" value="HFD_CENP-S"/>
    <property type="match status" value="1"/>
</dbReference>
<dbReference type="FunFam" id="1.10.20.10:FF:000063">
    <property type="entry name" value="Centromere protein S"/>
    <property type="match status" value="1"/>
</dbReference>
<dbReference type="Gene3D" id="1.10.20.10">
    <property type="entry name" value="Histone, subunit A"/>
    <property type="match status" value="1"/>
</dbReference>
<dbReference type="InterPro" id="IPR029003">
    <property type="entry name" value="CENP-S/Mhf1"/>
</dbReference>
<dbReference type="InterPro" id="IPR009072">
    <property type="entry name" value="Histone-fold"/>
</dbReference>
<dbReference type="PANTHER" id="PTHR22980:SF0">
    <property type="entry name" value="CENTROMERE PROTEIN S"/>
    <property type="match status" value="1"/>
</dbReference>
<dbReference type="PANTHER" id="PTHR22980">
    <property type="entry name" value="CORTISTATIN"/>
    <property type="match status" value="1"/>
</dbReference>
<dbReference type="Pfam" id="PF15630">
    <property type="entry name" value="CENP-S"/>
    <property type="match status" value="1"/>
</dbReference>
<dbReference type="SUPFAM" id="SSF47113">
    <property type="entry name" value="Histone-fold"/>
    <property type="match status" value="1"/>
</dbReference>
<organism>
    <name type="scientific">Xenopus laevis</name>
    <name type="common">African clawed frog</name>
    <dbReference type="NCBI Taxonomy" id="8355"/>
    <lineage>
        <taxon>Eukaryota</taxon>
        <taxon>Metazoa</taxon>
        <taxon>Chordata</taxon>
        <taxon>Craniata</taxon>
        <taxon>Vertebrata</taxon>
        <taxon>Euteleostomi</taxon>
        <taxon>Amphibia</taxon>
        <taxon>Batrachia</taxon>
        <taxon>Anura</taxon>
        <taxon>Pipoidea</taxon>
        <taxon>Pipidae</taxon>
        <taxon>Xenopodinae</taxon>
        <taxon>Xenopus</taxon>
        <taxon>Xenopus</taxon>
    </lineage>
</organism>
<name>CENPS_XENLA</name>
<evidence type="ECO:0000250" key="1">
    <source>
        <dbReference type="UniProtKB" id="Q8N2Z9"/>
    </source>
</evidence>
<evidence type="ECO:0000256" key="2">
    <source>
        <dbReference type="SAM" id="MobiDB-lite"/>
    </source>
</evidence>
<evidence type="ECO:0000305" key="3"/>
<gene>
    <name type="primary">cenps</name>
    <name type="synonym">apitd1</name>
    <name type="synonym">mhf1</name>
</gene>
<sequence>MAEGQEEHFSRTQRLKAAVHYVVGSLCQEVADDKEIDFSKQAIAAISEITFRQCESFAKDLEIFARHAKRTTINMDDVKLLARRSRSLYAHISKCSDEIAANSLEQKEKKKKKSVSGGNVSRNSDMDTVVPESKD</sequence>
<protein>
    <recommendedName>
        <fullName>Centromere protein S</fullName>
        <shortName>CENP-S</shortName>
    </recommendedName>
    <alternativeName>
        <fullName>Apoptosis-inducing TAF9-like domain-containing protein 1 homolog</fullName>
    </alternativeName>
    <alternativeName>
        <fullName>FANCM-interacting histone fold protein 1</fullName>
    </alternativeName>
</protein>